<gene>
    <name type="primary">T</name>
    <name type="ordered locus">lambdap15</name>
</gene>
<comment type="function">
    <text evidence="1 2 3">Promotes tail assembly by creating a scaffold for the tail tube proteins. Tail assembly proteins G and GT probably wrap the linear tape measure protein to create a tail assembly scaffold. This allows the polymerization of the tail tube protein, during which G and GT are released, therefore they are absent in the mature virion. The tail assembly protein GT is produced by a rare -1 ribosomal frameshift. The ratio of translated G/GT is about 20, and this ratio is important for proper tail assembly.</text>
</comment>
<comment type="subunit">
    <text evidence="1 3">Interacts (via C-terminus) with tail tube protein. Interacts (via N-terminus) with the tail assembly protein G and the tape measure protein.</text>
</comment>
<comment type="subcellular location">
    <subcellularLocation>
        <location evidence="1">Host cytoplasm</location>
    </subcellularLocation>
</comment>
<comment type="alternative products">
    <event type="ribosomal frameshifting"/>
    <isoform>
        <id>P03735-1</id>
        <name>Tail assembly protein GT</name>
        <sequence type="displayed"/>
    </isoform>
    <isoform>
        <id>P03734-1</id>
        <name>Tail assembly protein G</name>
        <sequence type="external"/>
    </isoform>
    <text>The tail assembly protein GT is produced by a rare -1 ribosomal frameshift. This expression strategy assures a fixed ration of G/GT.</text>
</comment>
<comment type="miscellaneous">
    <molecule>Isoform Tail assembly protein GT</molecule>
    <text>Frameshifted product of the GT gene, representing 3-4% of the translated protein.</text>
</comment>
<comment type="similarity">
    <text evidence="1">Belongs to the lambda-like tail assembly protein family.</text>
</comment>
<comment type="sequence caution" evidence="4">
    <conflict type="erroneous gene model prediction">
        <sequence resource="EMBL-CDS" id="AAA96547"/>
    </conflict>
</comment>
<organism>
    <name type="scientific">Escherichia phage lambda</name>
    <name type="common">Bacteriophage lambda</name>
    <dbReference type="NCBI Taxonomy" id="2681611"/>
    <lineage>
        <taxon>Viruses</taxon>
        <taxon>Duplodnaviria</taxon>
        <taxon>Heunggongvirae</taxon>
        <taxon>Uroviricota</taxon>
        <taxon>Caudoviricetes</taxon>
        <taxon>Lambdavirus</taxon>
        <taxon>Lambdavirus lambda</taxon>
    </lineage>
</organism>
<keyword id="KW-1035">Host cytoplasm</keyword>
<keyword id="KW-0426">Late protein</keyword>
<keyword id="KW-1185">Reference proteome</keyword>
<keyword id="KW-0688">Ribosomal frameshifting</keyword>
<keyword id="KW-1188">Viral release from host cell</keyword>
<keyword id="KW-1245">Viral tail assembly</keyword>
<name>GT_LAMBD</name>
<feature type="chain" id="PRO_0000077669" description="Tail assembly protein GT">
    <location>
        <begin position="1"/>
        <end position="279"/>
    </location>
</feature>
<dbReference type="EMBL" id="J02459">
    <property type="protein sequence ID" value="AAA96547.1"/>
    <property type="status" value="ALT_SEQ"/>
    <property type="molecule type" value="Genomic_DNA"/>
</dbReference>
<dbReference type="PIR" id="C43014">
    <property type="entry name" value="TLBPTL"/>
</dbReference>
<dbReference type="RefSeq" id="NP_040594.1">
    <property type="nucleotide sequence ID" value="NC_001416.1"/>
</dbReference>
<dbReference type="IntAct" id="P03735">
    <property type="interactions" value="1"/>
</dbReference>
<dbReference type="GeneID" id="2703489"/>
<dbReference type="KEGG" id="vg:2703489"/>
<dbReference type="Proteomes" id="UP000001711">
    <property type="component" value="Genome"/>
</dbReference>
<dbReference type="GO" id="GO:0030430">
    <property type="term" value="C:host cell cytoplasm"/>
    <property type="evidence" value="ECO:0007669"/>
    <property type="project" value="UniProtKB-SubCell"/>
</dbReference>
<dbReference type="GO" id="GO:0098003">
    <property type="term" value="P:viral tail assembly"/>
    <property type="evidence" value="ECO:0000314"/>
    <property type="project" value="UniProtKB"/>
</dbReference>
<dbReference type="GO" id="GO:0075523">
    <property type="term" value="P:viral translational frameshifting"/>
    <property type="evidence" value="ECO:0007669"/>
    <property type="project" value="UniProtKB-KW"/>
</dbReference>
<dbReference type="HAMAP" id="MF_04134">
    <property type="entry name" value="GT_LAMBD"/>
    <property type="match status" value="2"/>
</dbReference>
<dbReference type="InterPro" id="IPR009350">
    <property type="entry name" value="Phage_tail_T"/>
</dbReference>
<dbReference type="InterPro" id="IPR010027">
    <property type="entry name" value="Tail_assembly_G"/>
</dbReference>
<dbReference type="InterPro" id="IPR043704">
    <property type="entry name" value="Tail_assembly_GT"/>
</dbReference>
<dbReference type="NCBIfam" id="TIGR01715">
    <property type="entry name" value="phage_lam_T"/>
    <property type="match status" value="1"/>
</dbReference>
<dbReference type="NCBIfam" id="TIGR01674">
    <property type="entry name" value="phage_lambda_G"/>
    <property type="match status" value="1"/>
</dbReference>
<dbReference type="Pfam" id="PF06894">
    <property type="entry name" value="Phage_TAC_2"/>
    <property type="match status" value="1"/>
</dbReference>
<dbReference type="Pfam" id="PF06223">
    <property type="entry name" value="Phage_tail_T"/>
    <property type="match status" value="1"/>
</dbReference>
<evidence type="ECO:0000255" key="1">
    <source>
        <dbReference type="HAMAP-Rule" id="MF_04134"/>
    </source>
</evidence>
<evidence type="ECO:0000269" key="2">
    <source>
    </source>
</evidence>
<evidence type="ECO:0000269" key="3">
    <source>
    </source>
</evidence>
<evidence type="ECO:0000305" key="4"/>
<sequence length="279" mass="31171">MFLKTESFEHNGVTVTLSELSALQRIEHLALMKRQAEQAESDSNRKFTVEDAIRTGAFLVAMSLWHNHPQKTQMPSMNEAVKQIEQEVLTTWPTEAISHAENVVYRLSGMYEFVVNNAPEQTEDAGPAEPVSAGKVFDGELSFALKLAREMGRPDWRAMLAGMSSTEYADWHRFYSTHYFHDVLLDMHFSGLTYTVLSLFFSDPDMHPLDFSLLNRREADEEPEDDVLMQKAAGLAGGVRFGPDGNEVIPASPDVADMTEDDVMLMTVSEGIAGGVRYG</sequence>
<proteinExistence type="evidence at protein level"/>
<protein>
    <recommendedName>
        <fullName evidence="1">Tail assembly protein GT</fullName>
    </recommendedName>
    <alternativeName>
        <fullName evidence="1">Gene product 15</fullName>
        <shortName evidence="1">gp15</shortName>
    </alternativeName>
    <alternativeName>
        <fullName evidence="1">Gene product GT</fullName>
        <shortName evidence="1">gpGT</shortName>
    </alternativeName>
    <alternativeName>
        <fullName evidence="1">Minor tail protein GT</fullName>
    </alternativeName>
</protein>
<organismHost>
    <name type="scientific">Escherichia coli</name>
    <dbReference type="NCBI Taxonomy" id="562"/>
</organismHost>
<reference key="1">
    <citation type="journal article" date="1982" name="J. Mol. Biol.">
        <title>Nucleotide sequence of bacteriophage lambda DNA.</title>
        <authorList>
            <person name="Sanger F."/>
            <person name="Coulson A.R."/>
            <person name="Hong G.F."/>
            <person name="Hill D.F."/>
            <person name="Petersen G.B."/>
        </authorList>
    </citation>
    <scope>NUCLEOTIDE SEQUENCE [LARGE SCALE GENOMIC DNA]</scope>
</reference>
<reference key="2">
    <citation type="journal article" date="2013" name="J. Mol. Biol.">
        <title>A balanced ratio of proteins from gene G and frameshift-extended gene GT is required for phage lambda tail assembly.</title>
        <authorList>
            <person name="Xu J."/>
            <person name="Hendrix R.W."/>
            <person name="Duda R.L."/>
        </authorList>
    </citation>
    <scope>FUNCTION</scope>
</reference>
<reference key="3">
    <citation type="journal article" date="2014" name="J. Mol. Biol.">
        <title>Chaperone-protein interactions that mediate assembly of the bacteriophage lambda tail to the correct length.</title>
        <authorList>
            <person name="Xu J."/>
            <person name="Hendrix R.W."/>
            <person name="Duda R.L."/>
        </authorList>
    </citation>
    <scope>FUNCTION</scope>
    <scope>INTERACTION WITH TAIL ASSEMBLY PROTEIN G AND TAIL TUBE PROTEIN</scope>
</reference>
<reference key="4">
    <citation type="journal article" date="2004" name="Mol. Cell">
        <title>Conserved translational frameshift in dsDNA bacteriophage tail assembly genes.</title>
        <authorList>
            <person name="Xu J."/>
            <person name="Hendrix R.W."/>
            <person name="Duda R.L."/>
        </authorList>
    </citation>
    <scope>REVIEW</scope>
</reference>
<accession>P03735</accession>